<accession>A2BJL6</accession>
<protein>
    <recommendedName>
        <fullName evidence="1">Argininosuccinate synthase</fullName>
        <ecNumber evidence="1">6.3.4.5</ecNumber>
    </recommendedName>
    <alternativeName>
        <fullName evidence="1">Citrulline--aspartate ligase</fullName>
    </alternativeName>
</protein>
<feature type="chain" id="PRO_1000000399" description="Argininosuccinate synthase">
    <location>
        <begin position="1"/>
        <end position="396"/>
    </location>
</feature>
<feature type="binding site" evidence="1">
    <location>
        <begin position="6"/>
        <end position="14"/>
    </location>
    <ligand>
        <name>ATP</name>
        <dbReference type="ChEBI" id="CHEBI:30616"/>
    </ligand>
</feature>
<feature type="binding site" evidence="1">
    <location>
        <position position="83"/>
    </location>
    <ligand>
        <name>L-citrulline</name>
        <dbReference type="ChEBI" id="CHEBI:57743"/>
    </ligand>
</feature>
<feature type="binding site" evidence="1">
    <location>
        <position position="113"/>
    </location>
    <ligand>
        <name>ATP</name>
        <dbReference type="ChEBI" id="CHEBI:30616"/>
    </ligand>
</feature>
<feature type="binding site" evidence="1">
    <location>
        <position position="115"/>
    </location>
    <ligand>
        <name>L-aspartate</name>
        <dbReference type="ChEBI" id="CHEBI:29991"/>
    </ligand>
</feature>
<feature type="binding site" evidence="1">
    <location>
        <position position="119"/>
    </location>
    <ligand>
        <name>L-aspartate</name>
        <dbReference type="ChEBI" id="CHEBI:29991"/>
    </ligand>
</feature>
<feature type="binding site" evidence="1">
    <location>
        <position position="119"/>
    </location>
    <ligand>
        <name>L-citrulline</name>
        <dbReference type="ChEBI" id="CHEBI:57743"/>
    </ligand>
</feature>
<feature type="binding site" evidence="1">
    <location>
        <position position="120"/>
    </location>
    <ligand>
        <name>L-aspartate</name>
        <dbReference type="ChEBI" id="CHEBI:29991"/>
    </ligand>
</feature>
<feature type="binding site" evidence="1">
    <location>
        <position position="123"/>
    </location>
    <ligand>
        <name>L-citrulline</name>
        <dbReference type="ChEBI" id="CHEBI:57743"/>
    </ligand>
</feature>
<feature type="binding site" evidence="1">
    <location>
        <position position="171"/>
    </location>
    <ligand>
        <name>L-citrulline</name>
        <dbReference type="ChEBI" id="CHEBI:57743"/>
    </ligand>
</feature>
<feature type="binding site" evidence="1">
    <location>
        <position position="180"/>
    </location>
    <ligand>
        <name>L-citrulline</name>
        <dbReference type="ChEBI" id="CHEBI:57743"/>
    </ligand>
</feature>
<feature type="binding site" evidence="1">
    <location>
        <position position="256"/>
    </location>
    <ligand>
        <name>L-citrulline</name>
        <dbReference type="ChEBI" id="CHEBI:57743"/>
    </ligand>
</feature>
<feature type="binding site" evidence="1">
    <location>
        <position position="268"/>
    </location>
    <ligand>
        <name>L-citrulline</name>
        <dbReference type="ChEBI" id="CHEBI:57743"/>
    </ligand>
</feature>
<evidence type="ECO:0000255" key="1">
    <source>
        <dbReference type="HAMAP-Rule" id="MF_00005"/>
    </source>
</evidence>
<proteinExistence type="inferred from homology"/>
<gene>
    <name evidence="1" type="primary">argG</name>
    <name type="ordered locus">Hbut_0305</name>
</gene>
<keyword id="KW-0028">Amino-acid biosynthesis</keyword>
<keyword id="KW-0055">Arginine biosynthesis</keyword>
<keyword id="KW-0067">ATP-binding</keyword>
<keyword id="KW-0963">Cytoplasm</keyword>
<keyword id="KW-0436">Ligase</keyword>
<keyword id="KW-0547">Nucleotide-binding</keyword>
<keyword id="KW-1185">Reference proteome</keyword>
<organism>
    <name type="scientific">Hyperthermus butylicus (strain DSM 5456 / JCM 9403 / PLM1-5)</name>
    <dbReference type="NCBI Taxonomy" id="415426"/>
    <lineage>
        <taxon>Archaea</taxon>
        <taxon>Thermoproteota</taxon>
        <taxon>Thermoprotei</taxon>
        <taxon>Desulfurococcales</taxon>
        <taxon>Pyrodictiaceae</taxon>
        <taxon>Hyperthermus</taxon>
    </lineage>
</organism>
<sequence>MKVVLAYSGGLDTSAILVLLREQGHEVVTVTVSVGQEEDLEEVEERAYKLGASKHYTVNAVEEFAEKYISMAIKANALYEDKYPLGTALARPLIAEKVAEIARKESADAVAHGCTSKGNDQVRFDTMLKYYLGDDIKIIAPVRELRLTRAKAAEILRRNGFQPPGLHKTYSIDENLWSRSIEGGPLDDPMAEPPEDAFAWTVAPEKAPDQPLYLEIGFEKGIPVSINGEKMHLAKIVSLLNRLVGAYGYGRIDHIENRVVGLKSREVYEAPAALTLIEAHRDLEKTVYTPRELRFKRILDQEWSDLVYQGLWVEPLRATLEKAIDELNRWVTGTVRVKVYKGSLMVVGRWSPYSGYSREAIDYNHGWYPSDEEARGFITIWSLHSLAAAKARSLWG</sequence>
<comment type="catalytic activity">
    <reaction evidence="1">
        <text>L-citrulline + L-aspartate + ATP = 2-(N(omega)-L-arginino)succinate + AMP + diphosphate + H(+)</text>
        <dbReference type="Rhea" id="RHEA:10932"/>
        <dbReference type="ChEBI" id="CHEBI:15378"/>
        <dbReference type="ChEBI" id="CHEBI:29991"/>
        <dbReference type="ChEBI" id="CHEBI:30616"/>
        <dbReference type="ChEBI" id="CHEBI:33019"/>
        <dbReference type="ChEBI" id="CHEBI:57472"/>
        <dbReference type="ChEBI" id="CHEBI:57743"/>
        <dbReference type="ChEBI" id="CHEBI:456215"/>
        <dbReference type="EC" id="6.3.4.5"/>
    </reaction>
</comment>
<comment type="pathway">
    <text evidence="1">Amino-acid biosynthesis; L-arginine biosynthesis; L-arginine from L-ornithine and carbamoyl phosphate: step 2/3.</text>
</comment>
<comment type="subunit">
    <text evidence="1">Homotetramer.</text>
</comment>
<comment type="subcellular location">
    <subcellularLocation>
        <location evidence="1">Cytoplasm</location>
    </subcellularLocation>
</comment>
<comment type="similarity">
    <text evidence="1">Belongs to the argininosuccinate synthase family. Type 1 subfamily.</text>
</comment>
<name>ASSY_HYPBU</name>
<reference key="1">
    <citation type="journal article" date="2007" name="Archaea">
        <title>The genome of Hyperthermus butylicus: a sulfur-reducing, peptide fermenting, neutrophilic Crenarchaeote growing up to 108 degrees C.</title>
        <authorList>
            <person name="Bruegger K."/>
            <person name="Chen L."/>
            <person name="Stark M."/>
            <person name="Zibat A."/>
            <person name="Redder P."/>
            <person name="Ruepp A."/>
            <person name="Awayez M."/>
            <person name="She Q."/>
            <person name="Garrett R.A."/>
            <person name="Klenk H.-P."/>
        </authorList>
    </citation>
    <scope>NUCLEOTIDE SEQUENCE [LARGE SCALE GENOMIC DNA]</scope>
    <source>
        <strain>DSM 5456 / JCM 9403 / PLM1-5</strain>
    </source>
</reference>
<dbReference type="EC" id="6.3.4.5" evidence="1"/>
<dbReference type="EMBL" id="CP000493">
    <property type="protein sequence ID" value="ABM80177.1"/>
    <property type="molecule type" value="Genomic_DNA"/>
</dbReference>
<dbReference type="SMR" id="A2BJL6"/>
<dbReference type="STRING" id="415426.Hbut_0305"/>
<dbReference type="EnsemblBacteria" id="ABM80177">
    <property type="protein sequence ID" value="ABM80177"/>
    <property type="gene ID" value="Hbut_0305"/>
</dbReference>
<dbReference type="KEGG" id="hbu:Hbut_0305"/>
<dbReference type="eggNOG" id="arCOG00112">
    <property type="taxonomic scope" value="Archaea"/>
</dbReference>
<dbReference type="HOGENOM" id="CLU_032784_4_2_2"/>
<dbReference type="OrthoDB" id="5877at2157"/>
<dbReference type="UniPathway" id="UPA00068">
    <property type="reaction ID" value="UER00113"/>
</dbReference>
<dbReference type="Proteomes" id="UP000002593">
    <property type="component" value="Chromosome"/>
</dbReference>
<dbReference type="GO" id="GO:0005737">
    <property type="term" value="C:cytoplasm"/>
    <property type="evidence" value="ECO:0007669"/>
    <property type="project" value="UniProtKB-SubCell"/>
</dbReference>
<dbReference type="GO" id="GO:0004055">
    <property type="term" value="F:argininosuccinate synthase activity"/>
    <property type="evidence" value="ECO:0007669"/>
    <property type="project" value="UniProtKB-UniRule"/>
</dbReference>
<dbReference type="GO" id="GO:0005524">
    <property type="term" value="F:ATP binding"/>
    <property type="evidence" value="ECO:0007669"/>
    <property type="project" value="UniProtKB-UniRule"/>
</dbReference>
<dbReference type="GO" id="GO:0000053">
    <property type="term" value="P:argininosuccinate metabolic process"/>
    <property type="evidence" value="ECO:0007669"/>
    <property type="project" value="TreeGrafter"/>
</dbReference>
<dbReference type="GO" id="GO:0006526">
    <property type="term" value="P:L-arginine biosynthetic process"/>
    <property type="evidence" value="ECO:0007669"/>
    <property type="project" value="UniProtKB-UniRule"/>
</dbReference>
<dbReference type="GO" id="GO:0000050">
    <property type="term" value="P:urea cycle"/>
    <property type="evidence" value="ECO:0007669"/>
    <property type="project" value="TreeGrafter"/>
</dbReference>
<dbReference type="CDD" id="cd01999">
    <property type="entry name" value="ASS"/>
    <property type="match status" value="1"/>
</dbReference>
<dbReference type="FunFam" id="3.40.50.620:FF:000019">
    <property type="entry name" value="Argininosuccinate synthase"/>
    <property type="match status" value="1"/>
</dbReference>
<dbReference type="FunFam" id="3.90.1260.10:FF:000007">
    <property type="entry name" value="Argininosuccinate synthase"/>
    <property type="match status" value="1"/>
</dbReference>
<dbReference type="Gene3D" id="3.90.1260.10">
    <property type="entry name" value="Argininosuccinate synthetase, chain A, domain 2"/>
    <property type="match status" value="1"/>
</dbReference>
<dbReference type="Gene3D" id="3.40.50.620">
    <property type="entry name" value="HUPs"/>
    <property type="match status" value="1"/>
</dbReference>
<dbReference type="HAMAP" id="MF_00005">
    <property type="entry name" value="Arg_succ_synth_type1"/>
    <property type="match status" value="1"/>
</dbReference>
<dbReference type="InterPro" id="IPR048268">
    <property type="entry name" value="Arginosuc_syn_C"/>
</dbReference>
<dbReference type="InterPro" id="IPR048267">
    <property type="entry name" value="Arginosuc_syn_N"/>
</dbReference>
<dbReference type="InterPro" id="IPR001518">
    <property type="entry name" value="Arginosuc_synth"/>
</dbReference>
<dbReference type="InterPro" id="IPR018223">
    <property type="entry name" value="Arginosuc_synth_CS"/>
</dbReference>
<dbReference type="InterPro" id="IPR023434">
    <property type="entry name" value="Arginosuc_synth_type_1_subfam"/>
</dbReference>
<dbReference type="InterPro" id="IPR024074">
    <property type="entry name" value="AS_cat/multimer_dom_body"/>
</dbReference>
<dbReference type="InterPro" id="IPR014729">
    <property type="entry name" value="Rossmann-like_a/b/a_fold"/>
</dbReference>
<dbReference type="NCBIfam" id="TIGR00032">
    <property type="entry name" value="argG"/>
    <property type="match status" value="1"/>
</dbReference>
<dbReference type="NCBIfam" id="NF001770">
    <property type="entry name" value="PRK00509.1"/>
    <property type="match status" value="1"/>
</dbReference>
<dbReference type="PANTHER" id="PTHR11587">
    <property type="entry name" value="ARGININOSUCCINATE SYNTHASE"/>
    <property type="match status" value="1"/>
</dbReference>
<dbReference type="PANTHER" id="PTHR11587:SF2">
    <property type="entry name" value="ARGININOSUCCINATE SYNTHASE"/>
    <property type="match status" value="1"/>
</dbReference>
<dbReference type="Pfam" id="PF20979">
    <property type="entry name" value="Arginosuc_syn_C"/>
    <property type="match status" value="1"/>
</dbReference>
<dbReference type="Pfam" id="PF00764">
    <property type="entry name" value="Arginosuc_synth"/>
    <property type="match status" value="1"/>
</dbReference>
<dbReference type="SUPFAM" id="SSF52402">
    <property type="entry name" value="Adenine nucleotide alpha hydrolases-like"/>
    <property type="match status" value="1"/>
</dbReference>
<dbReference type="SUPFAM" id="SSF69864">
    <property type="entry name" value="Argininosuccinate synthetase, C-terminal domain"/>
    <property type="match status" value="1"/>
</dbReference>
<dbReference type="PROSITE" id="PS00564">
    <property type="entry name" value="ARGININOSUCCIN_SYN_1"/>
    <property type="match status" value="1"/>
</dbReference>
<dbReference type="PROSITE" id="PS00565">
    <property type="entry name" value="ARGININOSUCCIN_SYN_2"/>
    <property type="match status" value="1"/>
</dbReference>